<proteinExistence type="inferred from homology"/>
<evidence type="ECO:0000255" key="1">
    <source>
        <dbReference type="HAMAP-Rule" id="MF_00391"/>
    </source>
</evidence>
<evidence type="ECO:0000256" key="2">
    <source>
        <dbReference type="SAM" id="MobiDB-lite"/>
    </source>
</evidence>
<evidence type="ECO:0000305" key="3"/>
<comment type="similarity">
    <text evidence="1">Belongs to the bacterial ribosomal protein bL34 family.</text>
</comment>
<accession>Q319V2</accession>
<feature type="chain" id="PRO_1000013402" description="Large ribosomal subunit protein bL34">
    <location>
        <begin position="1"/>
        <end position="45"/>
    </location>
</feature>
<feature type="region of interest" description="Disordered" evidence="2">
    <location>
        <begin position="1"/>
        <end position="45"/>
    </location>
</feature>
<feature type="compositionally biased region" description="Basic residues" evidence="2">
    <location>
        <begin position="10"/>
        <end position="39"/>
    </location>
</feature>
<name>RL34_PROM9</name>
<keyword id="KW-0687">Ribonucleoprotein</keyword>
<keyword id="KW-0689">Ribosomal protein</keyword>
<protein>
    <recommendedName>
        <fullName evidence="1">Large ribosomal subunit protein bL34</fullName>
    </recommendedName>
    <alternativeName>
        <fullName evidence="3">50S ribosomal protein L34</fullName>
    </alternativeName>
</protein>
<gene>
    <name evidence="1" type="primary">rpmH</name>
    <name evidence="1" type="synonym">rpl34</name>
    <name type="ordered locus">PMT9312_1284</name>
</gene>
<dbReference type="EMBL" id="CP000111">
    <property type="protein sequence ID" value="ABB50343.1"/>
    <property type="molecule type" value="Genomic_DNA"/>
</dbReference>
<dbReference type="RefSeq" id="WP_002808184.1">
    <property type="nucleotide sequence ID" value="NC_007577.1"/>
</dbReference>
<dbReference type="SMR" id="Q319V2"/>
<dbReference type="STRING" id="74546.PMT9312_1284"/>
<dbReference type="KEGG" id="pmi:PMT9312_1284"/>
<dbReference type="eggNOG" id="COG0230">
    <property type="taxonomic scope" value="Bacteria"/>
</dbReference>
<dbReference type="HOGENOM" id="CLU_129938_2_1_3"/>
<dbReference type="OrthoDB" id="9804164at2"/>
<dbReference type="Proteomes" id="UP000002715">
    <property type="component" value="Chromosome"/>
</dbReference>
<dbReference type="GO" id="GO:1990904">
    <property type="term" value="C:ribonucleoprotein complex"/>
    <property type="evidence" value="ECO:0007669"/>
    <property type="project" value="UniProtKB-KW"/>
</dbReference>
<dbReference type="GO" id="GO:0005840">
    <property type="term" value="C:ribosome"/>
    <property type="evidence" value="ECO:0007669"/>
    <property type="project" value="UniProtKB-KW"/>
</dbReference>
<dbReference type="GO" id="GO:0003735">
    <property type="term" value="F:structural constituent of ribosome"/>
    <property type="evidence" value="ECO:0007669"/>
    <property type="project" value="InterPro"/>
</dbReference>
<dbReference type="GO" id="GO:0006412">
    <property type="term" value="P:translation"/>
    <property type="evidence" value="ECO:0007669"/>
    <property type="project" value="UniProtKB-UniRule"/>
</dbReference>
<dbReference type="Gene3D" id="1.10.287.3980">
    <property type="match status" value="1"/>
</dbReference>
<dbReference type="HAMAP" id="MF_00391">
    <property type="entry name" value="Ribosomal_bL34"/>
    <property type="match status" value="1"/>
</dbReference>
<dbReference type="InterPro" id="IPR000271">
    <property type="entry name" value="Ribosomal_bL34"/>
</dbReference>
<dbReference type="InterPro" id="IPR020939">
    <property type="entry name" value="Ribosomal_bL34_CS"/>
</dbReference>
<dbReference type="NCBIfam" id="TIGR01030">
    <property type="entry name" value="rpmH_bact"/>
    <property type="match status" value="1"/>
</dbReference>
<dbReference type="Pfam" id="PF00468">
    <property type="entry name" value="Ribosomal_L34"/>
    <property type="match status" value="1"/>
</dbReference>
<dbReference type="PROSITE" id="PS00784">
    <property type="entry name" value="RIBOSOMAL_L34"/>
    <property type="match status" value="1"/>
</dbReference>
<reference key="1">
    <citation type="journal article" date="2006" name="Science">
        <title>Genomic islands and the ecology and evolution of Prochlorococcus.</title>
        <authorList>
            <person name="Coleman M.L."/>
            <person name="Sullivan M.B."/>
            <person name="Martiny A.C."/>
            <person name="Steglich C."/>
            <person name="Barry K."/>
            <person name="Delong E.F."/>
            <person name="Chisholm S.W."/>
        </authorList>
    </citation>
    <scope>NUCLEOTIDE SEQUENCE [LARGE SCALE GENOMIC DNA]</scope>
    <source>
        <strain>MIT 9312</strain>
    </source>
</reference>
<sequence length="45" mass="5372">MTKRTFGGTSRKRKRVSGFRVRMRSHTGRRVIKSRRQKGRERIAV</sequence>
<organism>
    <name type="scientific">Prochlorococcus marinus (strain MIT 9312)</name>
    <dbReference type="NCBI Taxonomy" id="74546"/>
    <lineage>
        <taxon>Bacteria</taxon>
        <taxon>Bacillati</taxon>
        <taxon>Cyanobacteriota</taxon>
        <taxon>Cyanophyceae</taxon>
        <taxon>Synechococcales</taxon>
        <taxon>Prochlorococcaceae</taxon>
        <taxon>Prochlorococcus</taxon>
    </lineage>
</organism>